<protein>
    <recommendedName>
        <fullName>Probable hydrolase YhcX</fullName>
        <ecNumber>3.5.-.-</ecNumber>
    </recommendedName>
</protein>
<sequence>MSEKLDLTRFEKKMVIRNIEEKDIDKIIDLQKDCFPGMEPWKREHLISHLEHFPEGQFCAEFEGEIIGSCSSLLINFDEYDDRHTWQDITDDGYITNHNPDGLNMYGIEVMVHPKYRRMKIGHRLYEARKDLARRLNLKSIIIGGRIPNYHKYAEEMTAREYVEQVTRHQIYDPVLSFQLMNGFTLMRINPNYLPDDTASIKYATLMEWNNVDYLPQQTKRYYKSAFPVRICVIQYEMKKIYSFEEFANQVEYYVDVASDARSDFAVFPEIFTTQLMSFLEERSPSLAVQRITEYTEDYISLFTDLAVKYNVNIIGGSHFVEEEGKIYNIAYLFRRDGTIEKQYKLHITPNERKWWGISAGDQVRVFDTDCGKIAIQICYDIEFPELARIAADKGAKIIFTPFCTEDRQGYLRVRYCSQARAVENQIYTVISGTVGNLPQTENMDIQYAQSGIFAPSDFEFARDGIVGETNPNIEMVVIGDVDLEILRRQRQNGTVRQLKDRRRDIYHIQYKK</sequence>
<name>YHCX_BACSU</name>
<comment type="disruption phenotype">
    <text evidence="3">No visible growth phenotype.</text>
</comment>
<comment type="similarity">
    <text evidence="4">Belongs to the carbon-nitrogen hydrolase superfamily. NIT1/NIT2 family.</text>
</comment>
<proteinExistence type="inferred from homology"/>
<gene>
    <name type="primary">yhcX</name>
    <name type="ordered locus">BSU09250</name>
</gene>
<dbReference type="EC" id="3.5.-.-"/>
<dbReference type="EMBL" id="X96983">
    <property type="protein sequence ID" value="CAA65708.1"/>
    <property type="molecule type" value="Genomic_DNA"/>
</dbReference>
<dbReference type="EMBL" id="AL009126">
    <property type="protein sequence ID" value="CAB12753.2"/>
    <property type="molecule type" value="Genomic_DNA"/>
</dbReference>
<dbReference type="PIR" id="D69824">
    <property type="entry name" value="D69824"/>
</dbReference>
<dbReference type="RefSeq" id="NP_388806.2">
    <property type="nucleotide sequence ID" value="NC_000964.3"/>
</dbReference>
<dbReference type="RefSeq" id="WP_003245514.1">
    <property type="nucleotide sequence ID" value="NZ_OZ025638.1"/>
</dbReference>
<dbReference type="SMR" id="P54608"/>
<dbReference type="FunCoup" id="P54608">
    <property type="interactions" value="15"/>
</dbReference>
<dbReference type="STRING" id="224308.BSU09250"/>
<dbReference type="jPOST" id="P54608"/>
<dbReference type="PaxDb" id="224308-BSU09250"/>
<dbReference type="EnsemblBacteria" id="CAB12753">
    <property type="protein sequence ID" value="CAB12753"/>
    <property type="gene ID" value="BSU_09250"/>
</dbReference>
<dbReference type="GeneID" id="939265"/>
<dbReference type="KEGG" id="bsu:BSU09250"/>
<dbReference type="PATRIC" id="fig|224308.179.peg.997"/>
<dbReference type="eggNOG" id="COG0388">
    <property type="taxonomic scope" value="Bacteria"/>
</dbReference>
<dbReference type="eggNOG" id="COG3153">
    <property type="taxonomic scope" value="Bacteria"/>
</dbReference>
<dbReference type="InParanoid" id="P54608"/>
<dbReference type="OrthoDB" id="9811121at2"/>
<dbReference type="PhylomeDB" id="P54608"/>
<dbReference type="BioCyc" id="BSUB:BSU09250-MONOMER"/>
<dbReference type="Proteomes" id="UP000001570">
    <property type="component" value="Chromosome"/>
</dbReference>
<dbReference type="GO" id="GO:0016747">
    <property type="term" value="F:acyltransferase activity, transferring groups other than amino-acyl groups"/>
    <property type="evidence" value="ECO:0007669"/>
    <property type="project" value="InterPro"/>
</dbReference>
<dbReference type="GO" id="GO:0016787">
    <property type="term" value="F:hydrolase activity"/>
    <property type="evidence" value="ECO:0007669"/>
    <property type="project" value="UniProtKB-KW"/>
</dbReference>
<dbReference type="CDD" id="cd04301">
    <property type="entry name" value="NAT_SF"/>
    <property type="match status" value="1"/>
</dbReference>
<dbReference type="CDD" id="cd07574">
    <property type="entry name" value="nitrilase_Rim1_like"/>
    <property type="match status" value="1"/>
</dbReference>
<dbReference type="Gene3D" id="3.40.630.30">
    <property type="match status" value="1"/>
</dbReference>
<dbReference type="Gene3D" id="3.60.110.10">
    <property type="entry name" value="Carbon-nitrogen hydrolase"/>
    <property type="match status" value="1"/>
</dbReference>
<dbReference type="InterPro" id="IPR016181">
    <property type="entry name" value="Acyl_CoA_acyltransferase"/>
</dbReference>
<dbReference type="InterPro" id="IPR003010">
    <property type="entry name" value="C-N_Hydrolase"/>
</dbReference>
<dbReference type="InterPro" id="IPR036526">
    <property type="entry name" value="C-N_Hydrolase_sf"/>
</dbReference>
<dbReference type="InterPro" id="IPR000182">
    <property type="entry name" value="GNAT_dom"/>
</dbReference>
<dbReference type="InterPro" id="IPR001110">
    <property type="entry name" value="UPF0012_CS"/>
</dbReference>
<dbReference type="PANTHER" id="PTHR23088:SF50">
    <property type="entry name" value="HYDROLASE YHCX"/>
    <property type="match status" value="1"/>
</dbReference>
<dbReference type="PANTHER" id="PTHR23088">
    <property type="entry name" value="NITRILASE-RELATED"/>
    <property type="match status" value="1"/>
</dbReference>
<dbReference type="Pfam" id="PF00583">
    <property type="entry name" value="Acetyltransf_1"/>
    <property type="match status" value="1"/>
</dbReference>
<dbReference type="Pfam" id="PF00795">
    <property type="entry name" value="CN_hydrolase"/>
    <property type="match status" value="1"/>
</dbReference>
<dbReference type="SUPFAM" id="SSF55729">
    <property type="entry name" value="Acyl-CoA N-acyltransferases (Nat)"/>
    <property type="match status" value="1"/>
</dbReference>
<dbReference type="SUPFAM" id="SSF56317">
    <property type="entry name" value="Carbon-nitrogen hydrolase"/>
    <property type="match status" value="1"/>
</dbReference>
<dbReference type="PROSITE" id="PS50263">
    <property type="entry name" value="CN_HYDROLASE"/>
    <property type="match status" value="1"/>
</dbReference>
<dbReference type="PROSITE" id="PS51186">
    <property type="entry name" value="GNAT"/>
    <property type="match status" value="1"/>
</dbReference>
<dbReference type="PROSITE" id="PS01227">
    <property type="entry name" value="UPF0012"/>
    <property type="match status" value="1"/>
</dbReference>
<evidence type="ECO:0000255" key="1">
    <source>
        <dbReference type="PROSITE-ProRule" id="PRU00054"/>
    </source>
</evidence>
<evidence type="ECO:0000255" key="2">
    <source>
        <dbReference type="PROSITE-ProRule" id="PRU00532"/>
    </source>
</evidence>
<evidence type="ECO:0000269" key="3">
    <source>
    </source>
</evidence>
<evidence type="ECO:0000305" key="4"/>
<organism>
    <name type="scientific">Bacillus subtilis (strain 168)</name>
    <dbReference type="NCBI Taxonomy" id="224308"/>
    <lineage>
        <taxon>Bacteria</taxon>
        <taxon>Bacillati</taxon>
        <taxon>Bacillota</taxon>
        <taxon>Bacilli</taxon>
        <taxon>Bacillales</taxon>
        <taxon>Bacillaceae</taxon>
        <taxon>Bacillus</taxon>
    </lineage>
</organism>
<feature type="chain" id="PRO_0000213260" description="Probable hydrolase YhcX">
    <location>
        <begin position="1"/>
        <end position="513"/>
    </location>
</feature>
<feature type="domain" description="N-acetyltransferase" evidence="2">
    <location>
        <begin position="14"/>
        <end position="212"/>
    </location>
</feature>
<feature type="domain" description="CN hydrolase" evidence="1">
    <location>
        <begin position="229"/>
        <end position="484"/>
    </location>
</feature>
<feature type="active site" description="Proton acceptor" evidence="1">
    <location>
        <position position="270"/>
    </location>
</feature>
<feature type="active site" description="Proton donor" evidence="1">
    <location>
        <position position="345"/>
    </location>
</feature>
<feature type="active site" description="Nucleophile" evidence="1">
    <location>
        <position position="379"/>
    </location>
</feature>
<feature type="sequence conflict" description="In Ref. 1; CAA65708." evidence="4" ref="1">
    <original>N</original>
    <variation>S</variation>
    <location>
        <position position="137"/>
    </location>
</feature>
<accession>P54608</accession>
<reference key="1">
    <citation type="journal article" date="1996" name="Microbiology">
        <title>A 22 kb DNA sequence in the cspB-glpPFKD region at 75 degrees on the Bacillus subtilis chromosome.</title>
        <authorList>
            <person name="Noback M.A."/>
            <person name="Terpstra P."/>
            <person name="Holsappel S."/>
            <person name="Venema G."/>
            <person name="Bron S."/>
        </authorList>
    </citation>
    <scope>NUCLEOTIDE SEQUENCE [GENOMIC DNA]</scope>
    <source>
        <strain>168</strain>
    </source>
</reference>
<reference key="2">
    <citation type="journal article" date="1997" name="Nature">
        <title>The complete genome sequence of the Gram-positive bacterium Bacillus subtilis.</title>
        <authorList>
            <person name="Kunst F."/>
            <person name="Ogasawara N."/>
            <person name="Moszer I."/>
            <person name="Albertini A.M."/>
            <person name="Alloni G."/>
            <person name="Azevedo V."/>
            <person name="Bertero M.G."/>
            <person name="Bessieres P."/>
            <person name="Bolotin A."/>
            <person name="Borchert S."/>
            <person name="Borriss R."/>
            <person name="Boursier L."/>
            <person name="Brans A."/>
            <person name="Braun M."/>
            <person name="Brignell S.C."/>
            <person name="Bron S."/>
            <person name="Brouillet S."/>
            <person name="Bruschi C.V."/>
            <person name="Caldwell B."/>
            <person name="Capuano V."/>
            <person name="Carter N.M."/>
            <person name="Choi S.-K."/>
            <person name="Codani J.-J."/>
            <person name="Connerton I.F."/>
            <person name="Cummings N.J."/>
            <person name="Daniel R.A."/>
            <person name="Denizot F."/>
            <person name="Devine K.M."/>
            <person name="Duesterhoeft A."/>
            <person name="Ehrlich S.D."/>
            <person name="Emmerson P.T."/>
            <person name="Entian K.-D."/>
            <person name="Errington J."/>
            <person name="Fabret C."/>
            <person name="Ferrari E."/>
            <person name="Foulger D."/>
            <person name="Fritz C."/>
            <person name="Fujita M."/>
            <person name="Fujita Y."/>
            <person name="Fuma S."/>
            <person name="Galizzi A."/>
            <person name="Galleron N."/>
            <person name="Ghim S.-Y."/>
            <person name="Glaser P."/>
            <person name="Goffeau A."/>
            <person name="Golightly E.J."/>
            <person name="Grandi G."/>
            <person name="Guiseppi G."/>
            <person name="Guy B.J."/>
            <person name="Haga K."/>
            <person name="Haiech J."/>
            <person name="Harwood C.R."/>
            <person name="Henaut A."/>
            <person name="Hilbert H."/>
            <person name="Holsappel S."/>
            <person name="Hosono S."/>
            <person name="Hullo M.-F."/>
            <person name="Itaya M."/>
            <person name="Jones L.-M."/>
            <person name="Joris B."/>
            <person name="Karamata D."/>
            <person name="Kasahara Y."/>
            <person name="Klaerr-Blanchard M."/>
            <person name="Klein C."/>
            <person name="Kobayashi Y."/>
            <person name="Koetter P."/>
            <person name="Koningstein G."/>
            <person name="Krogh S."/>
            <person name="Kumano M."/>
            <person name="Kurita K."/>
            <person name="Lapidus A."/>
            <person name="Lardinois S."/>
            <person name="Lauber J."/>
            <person name="Lazarevic V."/>
            <person name="Lee S.-M."/>
            <person name="Levine A."/>
            <person name="Liu H."/>
            <person name="Masuda S."/>
            <person name="Mauel C."/>
            <person name="Medigue C."/>
            <person name="Medina N."/>
            <person name="Mellado R.P."/>
            <person name="Mizuno M."/>
            <person name="Moestl D."/>
            <person name="Nakai S."/>
            <person name="Noback M."/>
            <person name="Noone D."/>
            <person name="O'Reilly M."/>
            <person name="Ogawa K."/>
            <person name="Ogiwara A."/>
            <person name="Oudega B."/>
            <person name="Park S.-H."/>
            <person name="Parro V."/>
            <person name="Pohl T.M."/>
            <person name="Portetelle D."/>
            <person name="Porwollik S."/>
            <person name="Prescott A.M."/>
            <person name="Presecan E."/>
            <person name="Pujic P."/>
            <person name="Purnelle B."/>
            <person name="Rapoport G."/>
            <person name="Rey M."/>
            <person name="Reynolds S."/>
            <person name="Rieger M."/>
            <person name="Rivolta C."/>
            <person name="Rocha E."/>
            <person name="Roche B."/>
            <person name="Rose M."/>
            <person name="Sadaie Y."/>
            <person name="Sato T."/>
            <person name="Scanlan E."/>
            <person name="Schleich S."/>
            <person name="Schroeter R."/>
            <person name="Scoffone F."/>
            <person name="Sekiguchi J."/>
            <person name="Sekowska A."/>
            <person name="Seror S.J."/>
            <person name="Serror P."/>
            <person name="Shin B.-S."/>
            <person name="Soldo B."/>
            <person name="Sorokin A."/>
            <person name="Tacconi E."/>
            <person name="Takagi T."/>
            <person name="Takahashi H."/>
            <person name="Takemaru K."/>
            <person name="Takeuchi M."/>
            <person name="Tamakoshi A."/>
            <person name="Tanaka T."/>
            <person name="Terpstra P."/>
            <person name="Tognoni A."/>
            <person name="Tosato V."/>
            <person name="Uchiyama S."/>
            <person name="Vandenbol M."/>
            <person name="Vannier F."/>
            <person name="Vassarotti A."/>
            <person name="Viari A."/>
            <person name="Wambutt R."/>
            <person name="Wedler E."/>
            <person name="Wedler H."/>
            <person name="Weitzenegger T."/>
            <person name="Winters P."/>
            <person name="Wipat A."/>
            <person name="Yamamoto H."/>
            <person name="Yamane K."/>
            <person name="Yasumoto K."/>
            <person name="Yata K."/>
            <person name="Yoshida K."/>
            <person name="Yoshikawa H.-F."/>
            <person name="Zumstein E."/>
            <person name="Yoshikawa H."/>
            <person name="Danchin A."/>
        </authorList>
    </citation>
    <scope>NUCLEOTIDE SEQUENCE [LARGE SCALE GENOMIC DNA]</scope>
    <source>
        <strain>168</strain>
    </source>
</reference>
<reference key="3">
    <citation type="journal article" date="2009" name="Microbiology">
        <title>From a consortium sequence to a unified sequence: the Bacillus subtilis 168 reference genome a decade later.</title>
        <authorList>
            <person name="Barbe V."/>
            <person name="Cruveiller S."/>
            <person name="Kunst F."/>
            <person name="Lenoble P."/>
            <person name="Meurice G."/>
            <person name="Sekowska A."/>
            <person name="Vallenet D."/>
            <person name="Wang T."/>
            <person name="Moszer I."/>
            <person name="Medigue C."/>
            <person name="Danchin A."/>
        </authorList>
    </citation>
    <scope>SEQUENCE REVISION TO 137</scope>
</reference>
<reference key="4">
    <citation type="journal article" date="2022" name="RNA">
        <title>Discovery and initial characterization of YloC, a novel endoribonuclease in Bacillus subtilis.</title>
        <authorList>
            <person name="Ingle S."/>
            <person name="Chhabra S."/>
            <person name="Chen J."/>
            <person name="Lazarus M.B."/>
            <person name="Luo X."/>
            <person name="Bechhofer D.H."/>
        </authorList>
    </citation>
    <scope>DISRUPTION PHENOTYPE</scope>
    <source>
        <strain>BG1</strain>
    </source>
</reference>
<keyword id="KW-0378">Hydrolase</keyword>
<keyword id="KW-1185">Reference proteome</keyword>